<reference key="1">
    <citation type="journal article" date="2009" name="Genome Res.">
        <title>Comparative genomic analyses of the human fungal pathogens Coccidioides and their relatives.</title>
        <authorList>
            <person name="Sharpton T.J."/>
            <person name="Stajich J.E."/>
            <person name="Rounsley S.D."/>
            <person name="Gardner M.J."/>
            <person name="Wortman J.R."/>
            <person name="Jordar V.S."/>
            <person name="Maiti R."/>
            <person name="Kodira C.D."/>
            <person name="Neafsey D.E."/>
            <person name="Zeng Q."/>
            <person name="Hung C.-Y."/>
            <person name="McMahan C."/>
            <person name="Muszewska A."/>
            <person name="Grynberg M."/>
            <person name="Mandel M.A."/>
            <person name="Kellner E.M."/>
            <person name="Barker B.M."/>
            <person name="Galgiani J.N."/>
            <person name="Orbach M.J."/>
            <person name="Kirkland T.N."/>
            <person name="Cole G.T."/>
            <person name="Henn M.R."/>
            <person name="Birren B.W."/>
            <person name="Taylor J.W."/>
        </authorList>
    </citation>
    <scope>NUCLEOTIDE SEQUENCE [LARGE SCALE GENOMIC DNA]</scope>
    <source>
        <strain>RS</strain>
    </source>
</reference>
<reference key="2">
    <citation type="journal article" date="2010" name="Genome Res.">
        <title>Population genomic sequencing of Coccidioides fungi reveals recent hybridization and transposon control.</title>
        <authorList>
            <person name="Neafsey D.E."/>
            <person name="Barker B.M."/>
            <person name="Sharpton T.J."/>
            <person name="Stajich J.E."/>
            <person name="Park D.J."/>
            <person name="Whiston E."/>
            <person name="Hung C.-Y."/>
            <person name="McMahan C."/>
            <person name="White J."/>
            <person name="Sykes S."/>
            <person name="Heiman D."/>
            <person name="Young S."/>
            <person name="Zeng Q."/>
            <person name="Abouelleil A."/>
            <person name="Aftuck L."/>
            <person name="Bessette D."/>
            <person name="Brown A."/>
            <person name="FitzGerald M."/>
            <person name="Lui A."/>
            <person name="Macdonald J.P."/>
            <person name="Priest M."/>
            <person name="Orbach M.J."/>
            <person name="Galgiani J.N."/>
            <person name="Kirkland T.N."/>
            <person name="Cole G.T."/>
            <person name="Birren B.W."/>
            <person name="Henn M.R."/>
            <person name="Taylor J.W."/>
            <person name="Rounsley S.D."/>
        </authorList>
    </citation>
    <scope>GENOME REANNOTATION</scope>
    <source>
        <strain>RS</strain>
    </source>
</reference>
<dbReference type="EC" id="2.7.11.22"/>
<dbReference type="EC" id="2.7.11.23"/>
<dbReference type="EMBL" id="GG704911">
    <property type="protein sequence ID" value="EAS34709.3"/>
    <property type="molecule type" value="Genomic_DNA"/>
</dbReference>
<dbReference type="RefSeq" id="XP_001246292.2">
    <property type="nucleotide sequence ID" value="XM_001246291.2"/>
</dbReference>
<dbReference type="SMR" id="Q1EBK0"/>
<dbReference type="FunCoup" id="Q1EBK0">
    <property type="interactions" value="1010"/>
</dbReference>
<dbReference type="STRING" id="246410.Q1EBK0"/>
<dbReference type="GeneID" id="4566191"/>
<dbReference type="KEGG" id="cim:CIMG_00063"/>
<dbReference type="VEuPathDB" id="FungiDB:CIMG_00063"/>
<dbReference type="InParanoid" id="Q1EBK0"/>
<dbReference type="OMA" id="YFKNGGP"/>
<dbReference type="OrthoDB" id="6284126at2759"/>
<dbReference type="Proteomes" id="UP000001261">
    <property type="component" value="Unassembled WGS sequence"/>
</dbReference>
<dbReference type="GO" id="GO:0016592">
    <property type="term" value="C:mediator complex"/>
    <property type="evidence" value="ECO:0007669"/>
    <property type="project" value="TreeGrafter"/>
</dbReference>
<dbReference type="GO" id="GO:0005524">
    <property type="term" value="F:ATP binding"/>
    <property type="evidence" value="ECO:0007669"/>
    <property type="project" value="UniProtKB-KW"/>
</dbReference>
<dbReference type="GO" id="GO:0004693">
    <property type="term" value="F:cyclin-dependent protein serine/threonine kinase activity"/>
    <property type="evidence" value="ECO:0007669"/>
    <property type="project" value="UniProtKB-EC"/>
</dbReference>
<dbReference type="GO" id="GO:0046872">
    <property type="term" value="F:metal ion binding"/>
    <property type="evidence" value="ECO:0007669"/>
    <property type="project" value="UniProtKB-KW"/>
</dbReference>
<dbReference type="GO" id="GO:0106310">
    <property type="term" value="F:protein serine kinase activity"/>
    <property type="evidence" value="ECO:0007669"/>
    <property type="project" value="RHEA"/>
</dbReference>
<dbReference type="GO" id="GO:0008353">
    <property type="term" value="F:RNA polymerase II CTD heptapeptide repeat kinase activity"/>
    <property type="evidence" value="ECO:0007669"/>
    <property type="project" value="UniProtKB-EC"/>
</dbReference>
<dbReference type="CDD" id="cd07842">
    <property type="entry name" value="STKc_CDK8_like"/>
    <property type="match status" value="1"/>
</dbReference>
<dbReference type="FunFam" id="1.10.510.10:FF:000408">
    <property type="entry name" value="Serine/threonine-protein kinase SSN3"/>
    <property type="match status" value="1"/>
</dbReference>
<dbReference type="FunFam" id="3.30.200.20:FF:000426">
    <property type="entry name" value="Serine/threonine-protein kinase ssn3"/>
    <property type="match status" value="1"/>
</dbReference>
<dbReference type="Gene3D" id="3.30.200.20">
    <property type="entry name" value="Phosphorylase Kinase, domain 1"/>
    <property type="match status" value="1"/>
</dbReference>
<dbReference type="Gene3D" id="1.10.510.10">
    <property type="entry name" value="Transferase(Phosphotransferase) domain 1"/>
    <property type="match status" value="1"/>
</dbReference>
<dbReference type="InterPro" id="IPR050108">
    <property type="entry name" value="CDK"/>
</dbReference>
<dbReference type="InterPro" id="IPR011009">
    <property type="entry name" value="Kinase-like_dom_sf"/>
</dbReference>
<dbReference type="InterPro" id="IPR000719">
    <property type="entry name" value="Prot_kinase_dom"/>
</dbReference>
<dbReference type="InterPro" id="IPR008271">
    <property type="entry name" value="Ser/Thr_kinase_AS"/>
</dbReference>
<dbReference type="PANTHER" id="PTHR24056">
    <property type="entry name" value="CELL DIVISION PROTEIN KINASE"/>
    <property type="match status" value="1"/>
</dbReference>
<dbReference type="PANTHER" id="PTHR24056:SF495">
    <property type="entry name" value="CYCLIN-DEPENDENT KINASE 8-RELATED"/>
    <property type="match status" value="1"/>
</dbReference>
<dbReference type="Pfam" id="PF00069">
    <property type="entry name" value="Pkinase"/>
    <property type="match status" value="1"/>
</dbReference>
<dbReference type="SMART" id="SM00220">
    <property type="entry name" value="S_TKc"/>
    <property type="match status" value="1"/>
</dbReference>
<dbReference type="SUPFAM" id="SSF56112">
    <property type="entry name" value="Protein kinase-like (PK-like)"/>
    <property type="match status" value="1"/>
</dbReference>
<dbReference type="PROSITE" id="PS50011">
    <property type="entry name" value="PROTEIN_KINASE_DOM"/>
    <property type="match status" value="1"/>
</dbReference>
<dbReference type="PROSITE" id="PS00108">
    <property type="entry name" value="PROTEIN_KINASE_ST"/>
    <property type="match status" value="1"/>
</dbReference>
<organism>
    <name type="scientific">Coccidioides immitis (strain RS)</name>
    <name type="common">Valley fever fungus</name>
    <dbReference type="NCBI Taxonomy" id="246410"/>
    <lineage>
        <taxon>Eukaryota</taxon>
        <taxon>Fungi</taxon>
        <taxon>Dikarya</taxon>
        <taxon>Ascomycota</taxon>
        <taxon>Pezizomycotina</taxon>
        <taxon>Eurotiomycetes</taxon>
        <taxon>Eurotiomycetidae</taxon>
        <taxon>Onygenales</taxon>
        <taxon>Onygenaceae</taxon>
        <taxon>Coccidioides</taxon>
    </lineage>
</organism>
<protein>
    <recommendedName>
        <fullName>Serine/threonine-protein kinase SSN3</fullName>
        <ecNumber>2.7.11.22</ecNumber>
        <ecNumber>2.7.11.23</ecNumber>
    </recommendedName>
    <alternativeName>
        <fullName>Cyclin-dependent kinase 8</fullName>
    </alternativeName>
</protein>
<gene>
    <name type="primary">SSN3</name>
    <name type="synonym">CDK8</name>
    <name type="ORF">CIMG_00063</name>
</gene>
<proteinExistence type="inferred from homology"/>
<name>SSN3_COCIM</name>
<accession>Q1EBK0</accession>
<accession>J3KG40</accession>
<evidence type="ECO:0000250" key="1"/>
<evidence type="ECO:0000255" key="2">
    <source>
        <dbReference type="PROSITE-ProRule" id="PRU00159"/>
    </source>
</evidence>
<evidence type="ECO:0000255" key="3">
    <source>
        <dbReference type="PROSITE-ProRule" id="PRU10027"/>
    </source>
</evidence>
<evidence type="ECO:0000256" key="4">
    <source>
        <dbReference type="SAM" id="MobiDB-lite"/>
    </source>
</evidence>
<evidence type="ECO:0000305" key="5"/>
<sequence>MSFSNLPPSSGRGSHADGASGRSMPPFPGSSSFTANNPSKGIHPNLTLKRSVQSFDESLDNKKPLPFSYASKVKLREKYLIVGFISSGTYGRVYKAKGRDGVGGDFAIKKFKPDKEGEKVEYTGLSQSAIREISLCTELNHPNVVRLVETILEDKCVYMVFEYTEHDLLQIIHHHTQPQRHAIPAPMVKSILFQLLNGLLYLHSQWVMHRDLKPANILVTSKGAVRIGDLGLARVFKKPLNSLFSGDKVVVTIWYRAPELLLGARHYTTAVDLWAVGCIFAELLSLRPIFKGEEAKMDSKKTVPFQRNQMLKIIEILGLPKKEKWPGLSSMPEFPQLQAMAMAPGSGHLHKPSNLEHWYHVCLKSGGYSGSSPAGSPGKEGFDLLSRLLEYDPEKRISAKEALNHPYFTTGTPVAKNCFEGFEGKYPNRRVSQDDNDIRSGSLPGTKRSGLPDDTLTSRAAKRAREM</sequence>
<feature type="chain" id="PRO_0000312941" description="Serine/threonine-protein kinase SSN3">
    <location>
        <begin position="1"/>
        <end position="467"/>
    </location>
</feature>
<feature type="domain" description="Protein kinase" evidence="2">
    <location>
        <begin position="79"/>
        <end position="408"/>
    </location>
</feature>
<feature type="region of interest" description="Disordered" evidence="4">
    <location>
        <begin position="1"/>
        <end position="45"/>
    </location>
</feature>
<feature type="region of interest" description="Disordered" evidence="4">
    <location>
        <begin position="426"/>
        <end position="467"/>
    </location>
</feature>
<feature type="compositionally biased region" description="Polar residues" evidence="4">
    <location>
        <begin position="1"/>
        <end position="12"/>
    </location>
</feature>
<feature type="compositionally biased region" description="Polar residues" evidence="4">
    <location>
        <begin position="29"/>
        <end position="39"/>
    </location>
</feature>
<feature type="active site" description="Proton acceptor" evidence="2 3">
    <location>
        <position position="211"/>
    </location>
</feature>
<feature type="binding site" evidence="2">
    <location>
        <begin position="85"/>
        <end position="93"/>
    </location>
    <ligand>
        <name>ATP</name>
        <dbReference type="ChEBI" id="CHEBI:30616"/>
    </ligand>
</feature>
<feature type="binding site" evidence="2">
    <location>
        <position position="109"/>
    </location>
    <ligand>
        <name>ATP</name>
        <dbReference type="ChEBI" id="CHEBI:30616"/>
    </ligand>
</feature>
<comment type="function">
    <text evidence="1">Component of the SRB8-11 complex. The SRB8-11 complex is a regulatory module of the Mediator complex which is itself involved in regulation of basal and activated RNA polymerase II-dependent transcription. The SRB8-11 complex may be involved in the transcriptional repression of a subset of genes regulated by Mediator. It may inhibit the association of the Mediator complex with RNA polymerase II to form the holoenzyme complex. The SRB8-11 complex phosphorylates the C-terminal domain (CTD) of the largest subunit of RNA polymerase II (By similarity).</text>
</comment>
<comment type="catalytic activity">
    <reaction>
        <text>L-seryl-[protein] + ATP = O-phospho-L-seryl-[protein] + ADP + H(+)</text>
        <dbReference type="Rhea" id="RHEA:17989"/>
        <dbReference type="Rhea" id="RHEA-COMP:9863"/>
        <dbReference type="Rhea" id="RHEA-COMP:11604"/>
        <dbReference type="ChEBI" id="CHEBI:15378"/>
        <dbReference type="ChEBI" id="CHEBI:29999"/>
        <dbReference type="ChEBI" id="CHEBI:30616"/>
        <dbReference type="ChEBI" id="CHEBI:83421"/>
        <dbReference type="ChEBI" id="CHEBI:456216"/>
        <dbReference type="EC" id="2.7.11.22"/>
    </reaction>
</comment>
<comment type="catalytic activity">
    <reaction>
        <text>L-threonyl-[protein] + ATP = O-phospho-L-threonyl-[protein] + ADP + H(+)</text>
        <dbReference type="Rhea" id="RHEA:46608"/>
        <dbReference type="Rhea" id="RHEA-COMP:11060"/>
        <dbReference type="Rhea" id="RHEA-COMP:11605"/>
        <dbReference type="ChEBI" id="CHEBI:15378"/>
        <dbReference type="ChEBI" id="CHEBI:30013"/>
        <dbReference type="ChEBI" id="CHEBI:30616"/>
        <dbReference type="ChEBI" id="CHEBI:61977"/>
        <dbReference type="ChEBI" id="CHEBI:456216"/>
        <dbReference type="EC" id="2.7.11.22"/>
    </reaction>
</comment>
<comment type="catalytic activity">
    <reaction>
        <text>[DNA-directed RNA polymerase] + ATP = phospho-[DNA-directed RNA polymerase] + ADP + H(+)</text>
        <dbReference type="Rhea" id="RHEA:10216"/>
        <dbReference type="Rhea" id="RHEA-COMP:11321"/>
        <dbReference type="Rhea" id="RHEA-COMP:11322"/>
        <dbReference type="ChEBI" id="CHEBI:15378"/>
        <dbReference type="ChEBI" id="CHEBI:30616"/>
        <dbReference type="ChEBI" id="CHEBI:43176"/>
        <dbReference type="ChEBI" id="CHEBI:68546"/>
        <dbReference type="ChEBI" id="CHEBI:456216"/>
        <dbReference type="EC" id="2.7.11.23"/>
    </reaction>
</comment>
<comment type="cofactor">
    <cofactor evidence="1">
        <name>Mg(2+)</name>
        <dbReference type="ChEBI" id="CHEBI:18420"/>
    </cofactor>
</comment>
<comment type="subunit">
    <text evidence="1">Component of the SRB8-11 complex, a regulatory module of the Mediator complex.</text>
</comment>
<comment type="subcellular location">
    <subcellularLocation>
        <location evidence="5">Nucleus</location>
    </subcellularLocation>
</comment>
<comment type="similarity">
    <text evidence="5">Belongs to the protein kinase superfamily. CMGC Ser/Thr protein kinase family. CDC2/CDKX subfamily.</text>
</comment>
<keyword id="KW-0010">Activator</keyword>
<keyword id="KW-0067">ATP-binding</keyword>
<keyword id="KW-0418">Kinase</keyword>
<keyword id="KW-0460">Magnesium</keyword>
<keyword id="KW-0479">Metal-binding</keyword>
<keyword id="KW-0547">Nucleotide-binding</keyword>
<keyword id="KW-0539">Nucleus</keyword>
<keyword id="KW-1185">Reference proteome</keyword>
<keyword id="KW-0678">Repressor</keyword>
<keyword id="KW-0723">Serine/threonine-protein kinase</keyword>
<keyword id="KW-0804">Transcription</keyword>
<keyword id="KW-0805">Transcription regulation</keyword>
<keyword id="KW-0808">Transferase</keyword>